<name>Y150_TREPA</name>
<reference key="1">
    <citation type="journal article" date="1998" name="Science">
        <title>Complete genome sequence of Treponema pallidum, the syphilis spirochete.</title>
        <authorList>
            <person name="Fraser C.M."/>
            <person name="Norris S.J."/>
            <person name="Weinstock G.M."/>
            <person name="White O."/>
            <person name="Sutton G.G."/>
            <person name="Dodson R.J."/>
            <person name="Gwinn M.L."/>
            <person name="Hickey E.K."/>
            <person name="Clayton R.A."/>
            <person name="Ketchum K.A."/>
            <person name="Sodergren E."/>
            <person name="Hardham J.M."/>
            <person name="McLeod M.P."/>
            <person name="Salzberg S.L."/>
            <person name="Peterson J.D."/>
            <person name="Khalak H.G."/>
            <person name="Richardson D.L."/>
            <person name="Howell J.K."/>
            <person name="Chidambaram M."/>
            <person name="Utterback T.R."/>
            <person name="McDonald L.A."/>
            <person name="Artiach P."/>
            <person name="Bowman C."/>
            <person name="Cotton M.D."/>
            <person name="Fujii C."/>
            <person name="Garland S.A."/>
            <person name="Hatch B."/>
            <person name="Horst K."/>
            <person name="Roberts K.M."/>
            <person name="Sandusky M."/>
            <person name="Weidman J.F."/>
            <person name="Smith H.O."/>
            <person name="Venter J.C."/>
        </authorList>
    </citation>
    <scope>NUCLEOTIDE SEQUENCE [LARGE SCALE GENOMIC DNA]</scope>
    <source>
        <strain>Nichols</strain>
    </source>
</reference>
<sequence>MTYNTNTSLSSYAGLSAFALSVFCILWGTARTGSFLKEKALITCAADILARQAPELGVTSRTLRMVPSSPIPQAEVLRGKKNTGEEIFLYFFPLRGMYGSFPTLFLYDKKDGARFCHLIGNHPTPRDARFYGISSARIALQCRKIEHLHQTVAYE</sequence>
<organism>
    <name type="scientific">Treponema pallidum (strain Nichols)</name>
    <dbReference type="NCBI Taxonomy" id="243276"/>
    <lineage>
        <taxon>Bacteria</taxon>
        <taxon>Pseudomonadati</taxon>
        <taxon>Spirochaetota</taxon>
        <taxon>Spirochaetia</taxon>
        <taxon>Spirochaetales</taxon>
        <taxon>Treponemataceae</taxon>
        <taxon>Treponema</taxon>
    </lineage>
</organism>
<gene>
    <name type="ordered locus">TP_0150</name>
</gene>
<feature type="signal peptide" evidence="1">
    <location>
        <begin position="1"/>
        <end position="30"/>
    </location>
</feature>
<feature type="chain" id="PRO_0000014239" description="Uncharacterized protein TP_0150">
    <location>
        <begin position="31"/>
        <end position="155"/>
    </location>
</feature>
<evidence type="ECO:0000255" key="1"/>
<protein>
    <recommendedName>
        <fullName>Uncharacterized protein TP_0150</fullName>
    </recommendedName>
</protein>
<accession>O83185</accession>
<keyword id="KW-1185">Reference proteome</keyword>
<keyword id="KW-0732">Signal</keyword>
<proteinExistence type="inferred from homology"/>
<dbReference type="EMBL" id="AE000520">
    <property type="protein sequence ID" value="AAC65142.1"/>
    <property type="molecule type" value="Genomic_DNA"/>
</dbReference>
<dbReference type="PIR" id="G71361">
    <property type="entry name" value="G71361"/>
</dbReference>
<dbReference type="IntAct" id="O83185">
    <property type="interactions" value="13"/>
</dbReference>
<dbReference type="STRING" id="243276.TP_0150"/>
<dbReference type="EnsemblBacteria" id="AAC65142">
    <property type="protein sequence ID" value="AAC65142"/>
    <property type="gene ID" value="TP_0150"/>
</dbReference>
<dbReference type="KEGG" id="tpa:TP_0150"/>
<dbReference type="KEGG" id="tpw:TPANIC_0150"/>
<dbReference type="eggNOG" id="ENOG5032J02">
    <property type="taxonomic scope" value="Bacteria"/>
</dbReference>
<dbReference type="HOGENOM" id="CLU_1694721_0_0_12"/>
<dbReference type="Proteomes" id="UP000000811">
    <property type="component" value="Chromosome"/>
</dbReference>